<keyword id="KW-0560">Oxidoreductase</keyword>
<keyword id="KW-1185">Reference proteome</keyword>
<accession>O31642</accession>
<sequence length="251" mass="27449">MSHSQEKIALITGASSQGDIGTAICRKLASQGIHIFFTHWNSDTAWIEEFQQEILRMGVRCEAMKIDLSDAHAAFTIHEKISDKLGYPSILINNAAHSASDNYVSLDAKSLDEHYAVNMRSNFLLCVEFARRFKKSNLISGRIINMTSGQDLGPLPGELAYAATKGAISAFTRSLSQELAPLGITVNAVNPGPTDSTWMTDEIRNFLSPKFPMGRIGTPDDAARMIAFLASDEAEWITGQIIHSEGGFIRG</sequence>
<protein>
    <recommendedName>
        <fullName>Uncharacterized oxidoreductase YjdA</fullName>
        <ecNumber>1.-.-.-</ecNumber>
    </recommendedName>
</protein>
<name>YJDA_BACSU</name>
<evidence type="ECO:0000250" key="1"/>
<evidence type="ECO:0000255" key="2">
    <source>
        <dbReference type="PROSITE-ProRule" id="PRU10001"/>
    </source>
</evidence>
<evidence type="ECO:0000305" key="3"/>
<reference key="1">
    <citation type="journal article" date="1997" name="Nature">
        <title>The complete genome sequence of the Gram-positive bacterium Bacillus subtilis.</title>
        <authorList>
            <person name="Kunst F."/>
            <person name="Ogasawara N."/>
            <person name="Moszer I."/>
            <person name="Albertini A.M."/>
            <person name="Alloni G."/>
            <person name="Azevedo V."/>
            <person name="Bertero M.G."/>
            <person name="Bessieres P."/>
            <person name="Bolotin A."/>
            <person name="Borchert S."/>
            <person name="Borriss R."/>
            <person name="Boursier L."/>
            <person name="Brans A."/>
            <person name="Braun M."/>
            <person name="Brignell S.C."/>
            <person name="Bron S."/>
            <person name="Brouillet S."/>
            <person name="Bruschi C.V."/>
            <person name="Caldwell B."/>
            <person name="Capuano V."/>
            <person name="Carter N.M."/>
            <person name="Choi S.-K."/>
            <person name="Codani J.-J."/>
            <person name="Connerton I.F."/>
            <person name="Cummings N.J."/>
            <person name="Daniel R.A."/>
            <person name="Denizot F."/>
            <person name="Devine K.M."/>
            <person name="Duesterhoeft A."/>
            <person name="Ehrlich S.D."/>
            <person name="Emmerson P.T."/>
            <person name="Entian K.-D."/>
            <person name="Errington J."/>
            <person name="Fabret C."/>
            <person name="Ferrari E."/>
            <person name="Foulger D."/>
            <person name="Fritz C."/>
            <person name="Fujita M."/>
            <person name="Fujita Y."/>
            <person name="Fuma S."/>
            <person name="Galizzi A."/>
            <person name="Galleron N."/>
            <person name="Ghim S.-Y."/>
            <person name="Glaser P."/>
            <person name="Goffeau A."/>
            <person name="Golightly E.J."/>
            <person name="Grandi G."/>
            <person name="Guiseppi G."/>
            <person name="Guy B.J."/>
            <person name="Haga K."/>
            <person name="Haiech J."/>
            <person name="Harwood C.R."/>
            <person name="Henaut A."/>
            <person name="Hilbert H."/>
            <person name="Holsappel S."/>
            <person name="Hosono S."/>
            <person name="Hullo M.-F."/>
            <person name="Itaya M."/>
            <person name="Jones L.-M."/>
            <person name="Joris B."/>
            <person name="Karamata D."/>
            <person name="Kasahara Y."/>
            <person name="Klaerr-Blanchard M."/>
            <person name="Klein C."/>
            <person name="Kobayashi Y."/>
            <person name="Koetter P."/>
            <person name="Koningstein G."/>
            <person name="Krogh S."/>
            <person name="Kumano M."/>
            <person name="Kurita K."/>
            <person name="Lapidus A."/>
            <person name="Lardinois S."/>
            <person name="Lauber J."/>
            <person name="Lazarevic V."/>
            <person name="Lee S.-M."/>
            <person name="Levine A."/>
            <person name="Liu H."/>
            <person name="Masuda S."/>
            <person name="Mauel C."/>
            <person name="Medigue C."/>
            <person name="Medina N."/>
            <person name="Mellado R.P."/>
            <person name="Mizuno M."/>
            <person name="Moestl D."/>
            <person name="Nakai S."/>
            <person name="Noback M."/>
            <person name="Noone D."/>
            <person name="O'Reilly M."/>
            <person name="Ogawa K."/>
            <person name="Ogiwara A."/>
            <person name="Oudega B."/>
            <person name="Park S.-H."/>
            <person name="Parro V."/>
            <person name="Pohl T.M."/>
            <person name="Portetelle D."/>
            <person name="Porwollik S."/>
            <person name="Prescott A.M."/>
            <person name="Presecan E."/>
            <person name="Pujic P."/>
            <person name="Purnelle B."/>
            <person name="Rapoport G."/>
            <person name="Rey M."/>
            <person name="Reynolds S."/>
            <person name="Rieger M."/>
            <person name="Rivolta C."/>
            <person name="Rocha E."/>
            <person name="Roche B."/>
            <person name="Rose M."/>
            <person name="Sadaie Y."/>
            <person name="Sato T."/>
            <person name="Scanlan E."/>
            <person name="Schleich S."/>
            <person name="Schroeter R."/>
            <person name="Scoffone F."/>
            <person name="Sekiguchi J."/>
            <person name="Sekowska A."/>
            <person name="Seror S.J."/>
            <person name="Serror P."/>
            <person name="Shin B.-S."/>
            <person name="Soldo B."/>
            <person name="Sorokin A."/>
            <person name="Tacconi E."/>
            <person name="Takagi T."/>
            <person name="Takahashi H."/>
            <person name="Takemaru K."/>
            <person name="Takeuchi M."/>
            <person name="Tamakoshi A."/>
            <person name="Tanaka T."/>
            <person name="Terpstra P."/>
            <person name="Tognoni A."/>
            <person name="Tosato V."/>
            <person name="Uchiyama S."/>
            <person name="Vandenbol M."/>
            <person name="Vannier F."/>
            <person name="Vassarotti A."/>
            <person name="Viari A."/>
            <person name="Wambutt R."/>
            <person name="Wedler E."/>
            <person name="Wedler H."/>
            <person name="Weitzenegger T."/>
            <person name="Winters P."/>
            <person name="Wipat A."/>
            <person name="Yamamoto H."/>
            <person name="Yamane K."/>
            <person name="Yasumoto K."/>
            <person name="Yata K."/>
            <person name="Yoshida K."/>
            <person name="Yoshikawa H.-F."/>
            <person name="Zumstein E."/>
            <person name="Yoshikawa H."/>
            <person name="Danchin A."/>
        </authorList>
    </citation>
    <scope>NUCLEOTIDE SEQUENCE [LARGE SCALE GENOMIC DNA]</scope>
    <source>
        <strain>168</strain>
    </source>
</reference>
<organism>
    <name type="scientific">Bacillus subtilis (strain 168)</name>
    <dbReference type="NCBI Taxonomy" id="224308"/>
    <lineage>
        <taxon>Bacteria</taxon>
        <taxon>Bacillati</taxon>
        <taxon>Bacillota</taxon>
        <taxon>Bacilli</taxon>
        <taxon>Bacillales</taxon>
        <taxon>Bacillaceae</taxon>
        <taxon>Bacillus</taxon>
    </lineage>
</organism>
<proteinExistence type="inferred from homology"/>
<dbReference type="EC" id="1.-.-.-"/>
<dbReference type="EMBL" id="AL009126">
    <property type="protein sequence ID" value="CAB13055.1"/>
    <property type="molecule type" value="Genomic_DNA"/>
</dbReference>
<dbReference type="PIR" id="D69848">
    <property type="entry name" value="D69848"/>
</dbReference>
<dbReference type="RefSeq" id="NP_389080.1">
    <property type="nucleotide sequence ID" value="NC_000964.3"/>
</dbReference>
<dbReference type="RefSeq" id="WP_003245148.1">
    <property type="nucleotide sequence ID" value="NZ_OZ025638.1"/>
</dbReference>
<dbReference type="SMR" id="O31642"/>
<dbReference type="STRING" id="224308.BSU11980"/>
<dbReference type="PaxDb" id="224308-BSU11980"/>
<dbReference type="EnsemblBacteria" id="CAB13055">
    <property type="protein sequence ID" value="CAB13055"/>
    <property type="gene ID" value="BSU_11980"/>
</dbReference>
<dbReference type="GeneID" id="939818"/>
<dbReference type="KEGG" id="bsu:BSU11980"/>
<dbReference type="PATRIC" id="fig|224308.179.peg.1293"/>
<dbReference type="eggNOG" id="COG1028">
    <property type="taxonomic scope" value="Bacteria"/>
</dbReference>
<dbReference type="InParanoid" id="O31642"/>
<dbReference type="OrthoDB" id="9803333at2"/>
<dbReference type="PhylomeDB" id="O31642"/>
<dbReference type="BioCyc" id="BSUB:BSU11980-MONOMER"/>
<dbReference type="Proteomes" id="UP000001570">
    <property type="component" value="Chromosome"/>
</dbReference>
<dbReference type="GO" id="GO:0016614">
    <property type="term" value="F:oxidoreductase activity, acting on CH-OH group of donors"/>
    <property type="evidence" value="ECO:0007669"/>
    <property type="project" value="UniProtKB-ARBA"/>
</dbReference>
<dbReference type="CDD" id="cd05233">
    <property type="entry name" value="SDR_c"/>
    <property type="match status" value="1"/>
</dbReference>
<dbReference type="Gene3D" id="3.40.50.720">
    <property type="entry name" value="NAD(P)-binding Rossmann-like Domain"/>
    <property type="match status" value="1"/>
</dbReference>
<dbReference type="InterPro" id="IPR036291">
    <property type="entry name" value="NAD(P)-bd_dom_sf"/>
</dbReference>
<dbReference type="InterPro" id="IPR020904">
    <property type="entry name" value="Sc_DH/Rdtase_CS"/>
</dbReference>
<dbReference type="InterPro" id="IPR002347">
    <property type="entry name" value="SDR_fam"/>
</dbReference>
<dbReference type="NCBIfam" id="NF009389">
    <property type="entry name" value="PRK12748.1"/>
    <property type="match status" value="1"/>
</dbReference>
<dbReference type="PANTHER" id="PTHR48107">
    <property type="entry name" value="NADPH-DEPENDENT ALDEHYDE REDUCTASE-LIKE PROTEIN, CHLOROPLASTIC-RELATED"/>
    <property type="match status" value="1"/>
</dbReference>
<dbReference type="PANTHER" id="PTHR48107:SF7">
    <property type="entry name" value="RE15974P"/>
    <property type="match status" value="1"/>
</dbReference>
<dbReference type="Pfam" id="PF13561">
    <property type="entry name" value="adh_short_C2"/>
    <property type="match status" value="1"/>
</dbReference>
<dbReference type="PRINTS" id="PR00081">
    <property type="entry name" value="GDHRDH"/>
</dbReference>
<dbReference type="PRINTS" id="PR00080">
    <property type="entry name" value="SDRFAMILY"/>
</dbReference>
<dbReference type="SUPFAM" id="SSF51735">
    <property type="entry name" value="NAD(P)-binding Rossmann-fold domains"/>
    <property type="match status" value="1"/>
</dbReference>
<dbReference type="PROSITE" id="PS00061">
    <property type="entry name" value="ADH_SHORT"/>
    <property type="match status" value="1"/>
</dbReference>
<gene>
    <name type="primary">yjdA</name>
    <name type="ordered locus">BSU11980</name>
</gene>
<comment type="similarity">
    <text evidence="3">Belongs to the short-chain dehydrogenases/reductases (SDR) family.</text>
</comment>
<feature type="chain" id="PRO_0000376997" description="Uncharacterized oxidoreductase YjdA">
    <location>
        <begin position="1"/>
        <end position="251"/>
    </location>
</feature>
<feature type="active site" description="Proton acceptor" evidence="2">
    <location>
        <position position="161"/>
    </location>
</feature>
<feature type="binding site" evidence="1">
    <location>
        <begin position="12"/>
        <end position="21"/>
    </location>
    <ligand>
        <name>NADP(+)</name>
        <dbReference type="ChEBI" id="CHEBI:58349"/>
    </ligand>
</feature>
<feature type="binding site" evidence="1">
    <location>
        <position position="148"/>
    </location>
    <ligand>
        <name>substrate</name>
    </ligand>
</feature>